<dbReference type="EMBL" id="BC098680">
    <property type="protein sequence ID" value="AAH98680.1"/>
    <property type="molecule type" value="mRNA"/>
</dbReference>
<dbReference type="RefSeq" id="NP_001020876.1">
    <property type="nucleotide sequence ID" value="NM_001025705.1"/>
</dbReference>
<dbReference type="SMR" id="Q4KMA0"/>
<dbReference type="FunCoup" id="Q4KMA0">
    <property type="interactions" value="2165"/>
</dbReference>
<dbReference type="STRING" id="10116.ENSRNOP00000013449"/>
<dbReference type="iPTMnet" id="Q4KMA0"/>
<dbReference type="PhosphoSitePlus" id="Q4KMA0"/>
<dbReference type="jPOST" id="Q4KMA0"/>
<dbReference type="PaxDb" id="10116-ENSRNOP00000013449"/>
<dbReference type="GeneID" id="316051"/>
<dbReference type="KEGG" id="rno:316051"/>
<dbReference type="UCSC" id="RGD:1310530">
    <property type="organism name" value="rat"/>
</dbReference>
<dbReference type="AGR" id="RGD:1310530"/>
<dbReference type="CTD" id="64343"/>
<dbReference type="RGD" id="1310530">
    <property type="gene designation" value="Azi2"/>
</dbReference>
<dbReference type="eggNOG" id="ENOG502QV07">
    <property type="taxonomic scope" value="Eukaryota"/>
</dbReference>
<dbReference type="InParanoid" id="Q4KMA0"/>
<dbReference type="PhylomeDB" id="Q4KMA0"/>
<dbReference type="PRO" id="PR:Q4KMA0"/>
<dbReference type="Proteomes" id="UP000002494">
    <property type="component" value="Unplaced"/>
</dbReference>
<dbReference type="GO" id="GO:0005737">
    <property type="term" value="C:cytoplasm"/>
    <property type="evidence" value="ECO:0000266"/>
    <property type="project" value="RGD"/>
</dbReference>
<dbReference type="GO" id="GO:0097028">
    <property type="term" value="P:dendritic cell differentiation"/>
    <property type="evidence" value="ECO:0000266"/>
    <property type="project" value="RGD"/>
</dbReference>
<dbReference type="GO" id="GO:0044565">
    <property type="term" value="P:dendritic cell proliferation"/>
    <property type="evidence" value="ECO:0000266"/>
    <property type="project" value="RGD"/>
</dbReference>
<dbReference type="GO" id="GO:0000278">
    <property type="term" value="P:mitotic cell cycle"/>
    <property type="evidence" value="ECO:0000266"/>
    <property type="project" value="RGD"/>
</dbReference>
<dbReference type="GO" id="GO:0043124">
    <property type="term" value="P:negative regulation of canonical NF-kappaB signal transduction"/>
    <property type="evidence" value="ECO:0000266"/>
    <property type="project" value="RGD"/>
</dbReference>
<dbReference type="GO" id="GO:0042110">
    <property type="term" value="P:T cell activation"/>
    <property type="evidence" value="ECO:0000266"/>
    <property type="project" value="RGD"/>
</dbReference>
<dbReference type="InterPro" id="IPR024581">
    <property type="entry name" value="TBD"/>
</dbReference>
<dbReference type="InterPro" id="IPR051891">
    <property type="entry name" value="TBK1-IKBKE_adapters"/>
</dbReference>
<dbReference type="PANTHER" id="PTHR14432:SF6">
    <property type="entry name" value="5-AZACYTIDINE-INDUCED PROTEIN 2"/>
    <property type="match status" value="1"/>
</dbReference>
<dbReference type="PANTHER" id="PTHR14432">
    <property type="entry name" value="PROSAPIP2 PROTEIN/5-AZACYTIDINE INDUCED GENE 2"/>
    <property type="match status" value="1"/>
</dbReference>
<dbReference type="Pfam" id="PF12845">
    <property type="entry name" value="TBD"/>
    <property type="match status" value="1"/>
</dbReference>
<proteinExistence type="evidence at protein level"/>
<reference key="1">
    <citation type="journal article" date="2004" name="Genome Res.">
        <title>The status, quality, and expansion of the NIH full-length cDNA project: the Mammalian Gene Collection (MGC).</title>
        <authorList>
            <consortium name="The MGC Project Team"/>
        </authorList>
    </citation>
    <scope>NUCLEOTIDE SEQUENCE [LARGE SCALE MRNA]</scope>
    <source>
        <tissue>Thymus</tissue>
    </source>
</reference>
<reference key="2">
    <citation type="journal article" date="2012" name="Nat. Commun.">
        <title>Quantitative maps of protein phosphorylation sites across 14 different rat organs and tissues.</title>
        <authorList>
            <person name="Lundby A."/>
            <person name="Secher A."/>
            <person name="Lage K."/>
            <person name="Nordsborg N.B."/>
            <person name="Dmytriyev A."/>
            <person name="Lundby C."/>
            <person name="Olsen J.V."/>
        </authorList>
    </citation>
    <scope>PHOSPHORYLATION [LARGE SCALE ANALYSIS] AT SER-330</scope>
    <scope>IDENTIFICATION BY MASS SPECTROMETRY [LARGE SCALE ANALYSIS]</scope>
</reference>
<gene>
    <name type="primary">Azi2</name>
</gene>
<sequence>MDTLVEDDICILNHEKAHKREAVTPLSAYPGDESVASHFALVTAYEDIKKRLKDSEKENSFLKKRIRALEEKLVGARVEEETSSVGREQVNKAYHAYREVCIDRDNLKSRLEKISKDNSESLRALTEQLQCKEVELLQLRTEVETQQVMRNLNPPSSNWEVEKLSCDLKIHGLEQELELLRKECSDLRTELQKARQTGPSQEDILQDRDVIRPSLPREEHVPHQGPHHSDHMQHAYWELRREMANLHLVTRVQAELLRQLKTAAAGKACTQVGCVEDLGRDSAKLHLANCTAAYKRHPPLSPHGKATCYAPPSTLPGDRKAFSDKAVLQSWTDNERLTPNDGADFQEHNSYGRNSLEDNSWVFPSPPKSSETAFGESKSKILPSPNLPPLHYLDQHNQNCLYKS</sequence>
<evidence type="ECO:0000250" key="1">
    <source>
        <dbReference type="UniProtKB" id="Q9H6S1"/>
    </source>
</evidence>
<evidence type="ECO:0000250" key="2">
    <source>
        <dbReference type="UniProtKB" id="Q9QYP6"/>
    </source>
</evidence>
<evidence type="ECO:0000255" key="3"/>
<evidence type="ECO:0000256" key="4">
    <source>
        <dbReference type="SAM" id="MobiDB-lite"/>
    </source>
</evidence>
<evidence type="ECO:0007744" key="5">
    <source>
    </source>
</evidence>
<comment type="function">
    <text evidence="1">Adapter protein which binds TBK1 and IKBKE playing a role in antiviral innate immunity (By similarity). Activates serine/threonine-protein kinase TBK1 and facilitates its oligomerization (By similarity). Enhances the phosphorylation of NF-kappa-B p65 subunit RELA by TBK1 (By similarity). Promotes TBK1-induced as well as TNF-alpha or PMA-induced activation of NF-kappa-B (By similarity). Participates in IFNB promoter activation via TICAM1 (By similarity).</text>
</comment>
<comment type="subunit">
    <text evidence="1 2">Homodimer (By similarity). Interacts with IKBKE, TBK1 and TICAM1 (By similarity). Interacts with TAX1BP1 (By similarity). Interacts with CALCOCO2 (By similarity).</text>
</comment>
<comment type="subcellular location">
    <subcellularLocation>
        <location evidence="1">Cytoplasm</location>
    </subcellularLocation>
</comment>
<comment type="PTM">
    <text evidence="2">Ubiquitinated via 'Lys-48'-linked polyubiquitination by TRIM38, leading to its degradation.</text>
</comment>
<protein>
    <recommendedName>
        <fullName>5-azacytidine-induced protein 2</fullName>
    </recommendedName>
</protein>
<feature type="chain" id="PRO_0000280606" description="5-azacytidine-induced protein 2">
    <location>
        <begin position="1"/>
        <end position="404"/>
    </location>
</feature>
<feature type="region of interest" description="Homodimerization" evidence="2">
    <location>
        <begin position="1"/>
        <end position="198"/>
    </location>
</feature>
<feature type="region of interest" description="Interaction with TBK1 and IKBKE" evidence="1">
    <location>
        <begin position="229"/>
        <end position="269"/>
    </location>
</feature>
<feature type="region of interest" description="Disordered" evidence="4">
    <location>
        <begin position="332"/>
        <end position="351"/>
    </location>
</feature>
<feature type="region of interest" description="Disordered" evidence="4">
    <location>
        <begin position="356"/>
        <end position="390"/>
    </location>
</feature>
<feature type="coiled-coil region" evidence="3">
    <location>
        <begin position="40"/>
        <end position="198"/>
    </location>
</feature>
<feature type="modified residue" description="Phosphoserine" evidence="5">
    <location>
        <position position="330"/>
    </location>
</feature>
<feature type="modified residue" description="Phosphoserine" evidence="1">
    <location>
        <position position="365"/>
    </location>
</feature>
<name>AZI2_RAT</name>
<organism>
    <name type="scientific">Rattus norvegicus</name>
    <name type="common">Rat</name>
    <dbReference type="NCBI Taxonomy" id="10116"/>
    <lineage>
        <taxon>Eukaryota</taxon>
        <taxon>Metazoa</taxon>
        <taxon>Chordata</taxon>
        <taxon>Craniata</taxon>
        <taxon>Vertebrata</taxon>
        <taxon>Euteleostomi</taxon>
        <taxon>Mammalia</taxon>
        <taxon>Eutheria</taxon>
        <taxon>Euarchontoglires</taxon>
        <taxon>Glires</taxon>
        <taxon>Rodentia</taxon>
        <taxon>Myomorpha</taxon>
        <taxon>Muroidea</taxon>
        <taxon>Muridae</taxon>
        <taxon>Murinae</taxon>
        <taxon>Rattus</taxon>
    </lineage>
</organism>
<keyword id="KW-0175">Coiled coil</keyword>
<keyword id="KW-0963">Cytoplasm</keyword>
<keyword id="KW-0597">Phosphoprotein</keyword>
<keyword id="KW-1185">Reference proteome</keyword>
<keyword id="KW-0832">Ubl conjugation</keyword>
<accession>Q4KMA0</accession>